<evidence type="ECO:0000255" key="1">
    <source>
        <dbReference type="HAMAP-Rule" id="MF_00773"/>
    </source>
</evidence>
<evidence type="ECO:0000305" key="2"/>
<keyword id="KW-0479">Metal-binding</keyword>
<keyword id="KW-1185">Reference proteome</keyword>
<keyword id="KW-0687">Ribonucleoprotein</keyword>
<keyword id="KW-0689">Ribosomal protein</keyword>
<keyword id="KW-0694">RNA-binding</keyword>
<keyword id="KW-0699">rRNA-binding</keyword>
<keyword id="KW-0862">Zinc</keyword>
<keyword id="KW-0863">Zinc-finger</keyword>
<feature type="chain" id="PRO_1000017356" description="Large ribosomal subunit protein eL24">
    <location>
        <begin position="1"/>
        <end position="56"/>
    </location>
</feature>
<feature type="zinc finger region" description="C4-type" evidence="1">
    <location>
        <begin position="6"/>
        <end position="36"/>
    </location>
</feature>
<feature type="binding site" evidence="1">
    <location>
        <position position="6"/>
    </location>
    <ligand>
        <name>Zn(2+)</name>
        <dbReference type="ChEBI" id="CHEBI:29105"/>
    </ligand>
</feature>
<feature type="binding site" evidence="1">
    <location>
        <position position="9"/>
    </location>
    <ligand>
        <name>Zn(2+)</name>
        <dbReference type="ChEBI" id="CHEBI:29105"/>
    </ligand>
</feature>
<feature type="binding site" evidence="1">
    <location>
        <position position="32"/>
    </location>
    <ligand>
        <name>Zn(2+)</name>
        <dbReference type="ChEBI" id="CHEBI:29105"/>
    </ligand>
</feature>
<feature type="binding site" evidence="1">
    <location>
        <position position="36"/>
    </location>
    <ligand>
        <name>Zn(2+)</name>
        <dbReference type="ChEBI" id="CHEBI:29105"/>
    </ligand>
</feature>
<name>RL24E_METTP</name>
<organism>
    <name type="scientific">Methanothrix thermoacetophila (strain DSM 6194 / JCM 14653 / NBRC 101360 / PT)</name>
    <name type="common">Methanosaeta thermophila</name>
    <dbReference type="NCBI Taxonomy" id="349307"/>
    <lineage>
        <taxon>Archaea</taxon>
        <taxon>Methanobacteriati</taxon>
        <taxon>Methanobacteriota</taxon>
        <taxon>Stenosarchaea group</taxon>
        <taxon>Methanomicrobia</taxon>
        <taxon>Methanotrichales</taxon>
        <taxon>Methanotrichaceae</taxon>
        <taxon>Methanothrix</taxon>
    </lineage>
</organism>
<gene>
    <name evidence="1" type="primary">rpl24e</name>
    <name type="ordered locus">Mthe_0333</name>
</gene>
<proteinExistence type="inferred from homology"/>
<comment type="function">
    <text evidence="1">Binds to the 23S rRNA.</text>
</comment>
<comment type="cofactor">
    <cofactor evidence="1">
        <name>Zn(2+)</name>
        <dbReference type="ChEBI" id="CHEBI:29105"/>
    </cofactor>
    <text evidence="1">Binds 1 zinc ion per subunit.</text>
</comment>
<comment type="subunit">
    <text evidence="1">Part of the 50S ribosomal subunit. Forms a cluster with proteins L3 and L14.</text>
</comment>
<comment type="similarity">
    <text evidence="1">Belongs to the eukaryotic ribosomal protein eL24 family.</text>
</comment>
<dbReference type="EMBL" id="CP000477">
    <property type="protein sequence ID" value="ABK14127.1"/>
    <property type="molecule type" value="Genomic_DNA"/>
</dbReference>
<dbReference type="RefSeq" id="WP_011695526.1">
    <property type="nucleotide sequence ID" value="NC_008553.1"/>
</dbReference>
<dbReference type="SMR" id="A0B603"/>
<dbReference type="STRING" id="349307.Mthe_0333"/>
<dbReference type="GeneID" id="4461962"/>
<dbReference type="KEGG" id="mtp:Mthe_0333"/>
<dbReference type="HOGENOM" id="CLU_190191_0_0_2"/>
<dbReference type="OrthoDB" id="55506at2157"/>
<dbReference type="Proteomes" id="UP000000674">
    <property type="component" value="Chromosome"/>
</dbReference>
<dbReference type="GO" id="GO:1990904">
    <property type="term" value="C:ribonucleoprotein complex"/>
    <property type="evidence" value="ECO:0007669"/>
    <property type="project" value="UniProtKB-KW"/>
</dbReference>
<dbReference type="GO" id="GO:0005840">
    <property type="term" value="C:ribosome"/>
    <property type="evidence" value="ECO:0007669"/>
    <property type="project" value="UniProtKB-KW"/>
</dbReference>
<dbReference type="GO" id="GO:0019843">
    <property type="term" value="F:rRNA binding"/>
    <property type="evidence" value="ECO:0007669"/>
    <property type="project" value="UniProtKB-UniRule"/>
</dbReference>
<dbReference type="GO" id="GO:0003735">
    <property type="term" value="F:structural constituent of ribosome"/>
    <property type="evidence" value="ECO:0007669"/>
    <property type="project" value="InterPro"/>
</dbReference>
<dbReference type="GO" id="GO:0008270">
    <property type="term" value="F:zinc ion binding"/>
    <property type="evidence" value="ECO:0007669"/>
    <property type="project" value="UniProtKB-UniRule"/>
</dbReference>
<dbReference type="GO" id="GO:0006412">
    <property type="term" value="P:translation"/>
    <property type="evidence" value="ECO:0007669"/>
    <property type="project" value="UniProtKB-UniRule"/>
</dbReference>
<dbReference type="CDD" id="cd00472">
    <property type="entry name" value="Ribosomal_L24e_L24"/>
    <property type="match status" value="1"/>
</dbReference>
<dbReference type="Gene3D" id="2.30.170.20">
    <property type="entry name" value="Ribosomal protein L24e"/>
    <property type="match status" value="1"/>
</dbReference>
<dbReference type="HAMAP" id="MF_00773">
    <property type="entry name" value="Ribosomal_eL24"/>
    <property type="match status" value="1"/>
</dbReference>
<dbReference type="InterPro" id="IPR038630">
    <property type="entry name" value="L24e/L24_sf"/>
</dbReference>
<dbReference type="InterPro" id="IPR055345">
    <property type="entry name" value="Ribosomal_eL24-rel_arc"/>
</dbReference>
<dbReference type="InterPro" id="IPR000988">
    <property type="entry name" value="Ribosomal_eL24-rel_N"/>
</dbReference>
<dbReference type="InterPro" id="IPR011017">
    <property type="entry name" value="TRASH_dom"/>
</dbReference>
<dbReference type="NCBIfam" id="NF034186">
    <property type="entry name" value="PRK14891.1-1"/>
    <property type="match status" value="1"/>
</dbReference>
<dbReference type="Pfam" id="PF01246">
    <property type="entry name" value="Ribosomal_L24e"/>
    <property type="match status" value="1"/>
</dbReference>
<dbReference type="SMART" id="SM00746">
    <property type="entry name" value="TRASH"/>
    <property type="match status" value="1"/>
</dbReference>
<dbReference type="SUPFAM" id="SSF57716">
    <property type="entry name" value="Glucocorticoid receptor-like (DNA-binding domain)"/>
    <property type="match status" value="1"/>
</dbReference>
<reference key="1">
    <citation type="submission" date="2006-10" db="EMBL/GenBank/DDBJ databases">
        <title>Complete sequence of Methanosaeta thermophila PT.</title>
        <authorList>
            <consortium name="US DOE Joint Genome Institute"/>
            <person name="Copeland A."/>
            <person name="Lucas S."/>
            <person name="Lapidus A."/>
            <person name="Barry K."/>
            <person name="Detter J.C."/>
            <person name="Glavina del Rio T."/>
            <person name="Hammon N."/>
            <person name="Israni S."/>
            <person name="Pitluck S."/>
            <person name="Chain P."/>
            <person name="Malfatti S."/>
            <person name="Shin M."/>
            <person name="Vergez L."/>
            <person name="Schmutz J."/>
            <person name="Larimer F."/>
            <person name="Land M."/>
            <person name="Hauser L."/>
            <person name="Kyrpides N."/>
            <person name="Kim E."/>
            <person name="Smith K.S."/>
            <person name="Ingram-Smith C."/>
            <person name="Richardson P."/>
        </authorList>
    </citation>
    <scope>NUCLEOTIDE SEQUENCE [LARGE SCALE GENOMIC DNA]</scope>
    <source>
        <strain>DSM 6194 / JCM 14653 / NBRC 101360 / PT</strain>
    </source>
</reference>
<protein>
    <recommendedName>
        <fullName evidence="1">Large ribosomal subunit protein eL24</fullName>
    </recommendedName>
    <alternativeName>
        <fullName evidence="2">50S ribosomal protein L24e</fullName>
    </alternativeName>
</protein>
<sequence>MEERRCSFCNTRITPGTGKLYAKKDGTVYYFCSSKCEKNMRLGRVSRKIKWARKGA</sequence>
<accession>A0B603</accession>